<comment type="function">
    <text evidence="1">Key component of the proton channel; it plays a direct role in the translocation of protons across the membrane.</text>
</comment>
<comment type="subunit">
    <text evidence="1">F-type ATPases have 2 components, CF(1) - the catalytic core - and CF(0) - the membrane proton channel. CF(1) has five subunits: alpha(3), beta(3), gamma(1), delta(1), epsilon(1). CF(0) has three main subunits: a(1), b(2) and c(9-12). The alpha and beta chains form an alternating ring which encloses part of the gamma chain. CF(1) is attached to CF(0) by a central stalk formed by the gamma and epsilon chains, while a peripheral stalk is formed by the delta and b chains.</text>
</comment>
<comment type="subcellular location">
    <subcellularLocation>
        <location evidence="1">Cell inner membrane</location>
        <topology evidence="1">Multi-pass membrane protein</topology>
    </subcellularLocation>
</comment>
<comment type="similarity">
    <text evidence="1">Belongs to the ATPase A chain family.</text>
</comment>
<evidence type="ECO:0000255" key="1">
    <source>
        <dbReference type="HAMAP-Rule" id="MF_01393"/>
    </source>
</evidence>
<name>ATP6_CHRVO</name>
<protein>
    <recommendedName>
        <fullName evidence="1">ATP synthase subunit a</fullName>
    </recommendedName>
    <alternativeName>
        <fullName evidence="1">ATP synthase F0 sector subunit a</fullName>
    </alternativeName>
    <alternativeName>
        <fullName evidence="1">F-ATPase subunit 6</fullName>
    </alternativeName>
</protein>
<keyword id="KW-0066">ATP synthesis</keyword>
<keyword id="KW-0997">Cell inner membrane</keyword>
<keyword id="KW-1003">Cell membrane</keyword>
<keyword id="KW-0138">CF(0)</keyword>
<keyword id="KW-0375">Hydrogen ion transport</keyword>
<keyword id="KW-0406">Ion transport</keyword>
<keyword id="KW-0472">Membrane</keyword>
<keyword id="KW-1185">Reference proteome</keyword>
<keyword id="KW-0812">Transmembrane</keyword>
<keyword id="KW-1133">Transmembrane helix</keyword>
<keyword id="KW-0813">Transport</keyword>
<accession>Q7P0A1</accession>
<organism>
    <name type="scientific">Chromobacterium violaceum (strain ATCC 12472 / DSM 30191 / JCM 1249 / CCUG 213 / NBRC 12614 / NCIMB 9131 / NCTC 9757 / MK)</name>
    <dbReference type="NCBI Taxonomy" id="243365"/>
    <lineage>
        <taxon>Bacteria</taxon>
        <taxon>Pseudomonadati</taxon>
        <taxon>Pseudomonadota</taxon>
        <taxon>Betaproteobacteria</taxon>
        <taxon>Neisseriales</taxon>
        <taxon>Chromobacteriaceae</taxon>
        <taxon>Chromobacterium</taxon>
    </lineage>
</organism>
<proteinExistence type="inferred from homology"/>
<dbReference type="EMBL" id="AE016825">
    <property type="protein sequence ID" value="AAQ58342.1"/>
    <property type="molecule type" value="Genomic_DNA"/>
</dbReference>
<dbReference type="RefSeq" id="WP_011134221.1">
    <property type="nucleotide sequence ID" value="NC_005085.1"/>
</dbReference>
<dbReference type="SMR" id="Q7P0A1"/>
<dbReference type="STRING" id="243365.CV_0666"/>
<dbReference type="GeneID" id="66365440"/>
<dbReference type="KEGG" id="cvi:CV_0666"/>
<dbReference type="eggNOG" id="COG0356">
    <property type="taxonomic scope" value="Bacteria"/>
</dbReference>
<dbReference type="HOGENOM" id="CLU_041018_1_0_4"/>
<dbReference type="OrthoDB" id="9789241at2"/>
<dbReference type="Proteomes" id="UP000001424">
    <property type="component" value="Chromosome"/>
</dbReference>
<dbReference type="GO" id="GO:0005886">
    <property type="term" value="C:plasma membrane"/>
    <property type="evidence" value="ECO:0007669"/>
    <property type="project" value="UniProtKB-SubCell"/>
</dbReference>
<dbReference type="GO" id="GO:0045259">
    <property type="term" value="C:proton-transporting ATP synthase complex"/>
    <property type="evidence" value="ECO:0007669"/>
    <property type="project" value="UniProtKB-KW"/>
</dbReference>
<dbReference type="GO" id="GO:0046933">
    <property type="term" value="F:proton-transporting ATP synthase activity, rotational mechanism"/>
    <property type="evidence" value="ECO:0007669"/>
    <property type="project" value="UniProtKB-UniRule"/>
</dbReference>
<dbReference type="GO" id="GO:0042777">
    <property type="term" value="P:proton motive force-driven plasma membrane ATP synthesis"/>
    <property type="evidence" value="ECO:0007669"/>
    <property type="project" value="TreeGrafter"/>
</dbReference>
<dbReference type="CDD" id="cd00310">
    <property type="entry name" value="ATP-synt_Fo_a_6"/>
    <property type="match status" value="1"/>
</dbReference>
<dbReference type="FunFam" id="1.20.120.220:FF:000002">
    <property type="entry name" value="ATP synthase subunit a"/>
    <property type="match status" value="1"/>
</dbReference>
<dbReference type="Gene3D" id="1.20.120.220">
    <property type="entry name" value="ATP synthase, F0 complex, subunit A"/>
    <property type="match status" value="1"/>
</dbReference>
<dbReference type="HAMAP" id="MF_01393">
    <property type="entry name" value="ATP_synth_a_bact"/>
    <property type="match status" value="1"/>
</dbReference>
<dbReference type="InterPro" id="IPR045082">
    <property type="entry name" value="ATP_syn_F0_a_bact/chloroplast"/>
</dbReference>
<dbReference type="InterPro" id="IPR000568">
    <property type="entry name" value="ATP_synth_F0_asu"/>
</dbReference>
<dbReference type="InterPro" id="IPR023011">
    <property type="entry name" value="ATP_synth_F0_asu_AS"/>
</dbReference>
<dbReference type="InterPro" id="IPR035908">
    <property type="entry name" value="F0_ATP_A_sf"/>
</dbReference>
<dbReference type="NCBIfam" id="TIGR01131">
    <property type="entry name" value="ATP_synt_6_or_A"/>
    <property type="match status" value="1"/>
</dbReference>
<dbReference type="NCBIfam" id="NF004477">
    <property type="entry name" value="PRK05815.1-1"/>
    <property type="match status" value="1"/>
</dbReference>
<dbReference type="PANTHER" id="PTHR42823">
    <property type="entry name" value="ATP SYNTHASE SUBUNIT A, CHLOROPLASTIC"/>
    <property type="match status" value="1"/>
</dbReference>
<dbReference type="PANTHER" id="PTHR42823:SF3">
    <property type="entry name" value="ATP SYNTHASE SUBUNIT A, CHLOROPLASTIC"/>
    <property type="match status" value="1"/>
</dbReference>
<dbReference type="Pfam" id="PF00119">
    <property type="entry name" value="ATP-synt_A"/>
    <property type="match status" value="1"/>
</dbReference>
<dbReference type="SUPFAM" id="SSF81336">
    <property type="entry name" value="F1F0 ATP synthase subunit A"/>
    <property type="match status" value="1"/>
</dbReference>
<dbReference type="PROSITE" id="PS00449">
    <property type="entry name" value="ATPASE_A"/>
    <property type="match status" value="1"/>
</dbReference>
<reference key="1">
    <citation type="journal article" date="2003" name="Proc. Natl. Acad. Sci. U.S.A.">
        <title>The complete genome sequence of Chromobacterium violaceum reveals remarkable and exploitable bacterial adaptability.</title>
        <authorList>
            <person name="Vasconcelos A.T.R."/>
            <person name="de Almeida D.F."/>
            <person name="Hungria M."/>
            <person name="Guimaraes C.T."/>
            <person name="Antonio R.V."/>
            <person name="Almeida F.C."/>
            <person name="de Almeida L.G.P."/>
            <person name="de Almeida R."/>
            <person name="Alves-Gomes J.A."/>
            <person name="Andrade E.M."/>
            <person name="Araripe J."/>
            <person name="de Araujo M.F.F."/>
            <person name="Astolfi-Filho S."/>
            <person name="Azevedo V."/>
            <person name="Baptista A.J."/>
            <person name="Bataus L.A.M."/>
            <person name="Batista J.S."/>
            <person name="Belo A."/>
            <person name="van den Berg C."/>
            <person name="Bogo M."/>
            <person name="Bonatto S."/>
            <person name="Bordignon J."/>
            <person name="Brigido M.M."/>
            <person name="Brito C.A."/>
            <person name="Brocchi M."/>
            <person name="Burity H.A."/>
            <person name="Camargo A.A."/>
            <person name="Cardoso D.D.P."/>
            <person name="Carneiro N.P."/>
            <person name="Carraro D.M."/>
            <person name="Carvalho C.M.B."/>
            <person name="Cascardo J.C.M."/>
            <person name="Cavada B.S."/>
            <person name="Chueire L.M.O."/>
            <person name="Creczynski-Pasa T.B."/>
            <person name="Cunha-Junior N.C."/>
            <person name="Fagundes N."/>
            <person name="Falcao C.L."/>
            <person name="Fantinatti F."/>
            <person name="Farias I.P."/>
            <person name="Felipe M.S.S."/>
            <person name="Ferrari L.P."/>
            <person name="Ferro J.A."/>
            <person name="Ferro M.I.T."/>
            <person name="Franco G.R."/>
            <person name="Freitas N.S.A."/>
            <person name="Furlan L.R."/>
            <person name="Gazzinelli R.T."/>
            <person name="Gomes E.A."/>
            <person name="Goncalves P.R."/>
            <person name="Grangeiro T.B."/>
            <person name="Grattapaglia D."/>
            <person name="Grisard E.C."/>
            <person name="Hanna E.S."/>
            <person name="Jardim S.N."/>
            <person name="Laurino J."/>
            <person name="Leoi L.C.T."/>
            <person name="Lima L.F.A."/>
            <person name="Loureiro M.F."/>
            <person name="Lyra M.C.C.P."/>
            <person name="Madeira H.M.F."/>
            <person name="Manfio G.P."/>
            <person name="Maranhao A.Q."/>
            <person name="Martins W.S."/>
            <person name="di Mauro S.M.Z."/>
            <person name="de Medeiros S.R.B."/>
            <person name="Meissner R.V."/>
            <person name="Moreira M.A.M."/>
            <person name="Nascimento F.F."/>
            <person name="Nicolas M.F."/>
            <person name="Oliveira J.G."/>
            <person name="Oliveira S.C."/>
            <person name="Paixao R.F.C."/>
            <person name="Parente J.A."/>
            <person name="Pedrosa F.O."/>
            <person name="Pena S.D.J."/>
            <person name="Pereira J.O."/>
            <person name="Pereira M."/>
            <person name="Pinto L.S.R.C."/>
            <person name="Pinto L.S."/>
            <person name="Porto J.I.R."/>
            <person name="Potrich D.P."/>
            <person name="Ramalho-Neto C.E."/>
            <person name="Reis A.M.M."/>
            <person name="Rigo L.U."/>
            <person name="Rondinelli E."/>
            <person name="Santos E.B.P."/>
            <person name="Santos F.R."/>
            <person name="Schneider M.P.C."/>
            <person name="Seuanez H.N."/>
            <person name="Silva A.M.R."/>
            <person name="da Silva A.L.C."/>
            <person name="Silva D.W."/>
            <person name="Silva R."/>
            <person name="Simoes I.C."/>
            <person name="Simon D."/>
            <person name="Soares C.M.A."/>
            <person name="Soares R.B.A."/>
            <person name="Souza E.M."/>
            <person name="Souza K.R.L."/>
            <person name="Souza R.C."/>
            <person name="Steffens M.B.R."/>
            <person name="Steindel M."/>
            <person name="Teixeira S.R."/>
            <person name="Urmenyi T."/>
            <person name="Vettore A."/>
            <person name="Wassem R."/>
            <person name="Zaha A."/>
            <person name="Simpson A.J.G."/>
        </authorList>
    </citation>
    <scope>NUCLEOTIDE SEQUENCE [LARGE SCALE GENOMIC DNA]</scope>
    <source>
        <strain>ATCC 12472 / DSM 30191 / JCM 1249 / CCUG 213 / NBRC 12614 / NCIMB 9131 / NCTC 9757 / MK</strain>
    </source>
</reference>
<gene>
    <name evidence="1" type="primary">atpB</name>
    <name type="ordered locus">CV_0666</name>
</gene>
<sequence>MASNATDYIKHHLTFWNSDPSAGFWSLHVDTFSISLVLGFLFAAVFAMVARRASIEAPGRLQLFVEMIVELVQTQVREVFHGKSKMIAPLALTIFCWVFLMNFMDLFPVDLFPMAAQWIGYTFFGLEPHHVYFRVVPSADVNATFAMSLSVLILIVGFSIKAKGLGGWGKELLTAPFHSSNPVGAIILAPLNFAFQLVELAAKPISLSLRLFGNLYAGELIFILIALLPWGLQWVLGAPWAIFHILIITLQAFVFMMLTIVYLSLAVEAH</sequence>
<feature type="chain" id="PRO_0000362273" description="ATP synthase subunit a">
    <location>
        <begin position="1"/>
        <end position="270"/>
    </location>
</feature>
<feature type="transmembrane region" description="Helical" evidence="1">
    <location>
        <begin position="29"/>
        <end position="49"/>
    </location>
</feature>
<feature type="transmembrane region" description="Helical" evidence="1">
    <location>
        <begin position="87"/>
        <end position="107"/>
    </location>
</feature>
<feature type="transmembrane region" description="Helical" evidence="1">
    <location>
        <begin position="108"/>
        <end position="128"/>
    </location>
</feature>
<feature type="transmembrane region" description="Helical" evidence="1">
    <location>
        <begin position="140"/>
        <end position="160"/>
    </location>
</feature>
<feature type="transmembrane region" description="Helical" evidence="1">
    <location>
        <begin position="182"/>
        <end position="202"/>
    </location>
</feature>
<feature type="transmembrane region" description="Helical" evidence="1">
    <location>
        <begin position="220"/>
        <end position="240"/>
    </location>
</feature>
<feature type="transmembrane region" description="Helical" evidence="1">
    <location>
        <begin position="241"/>
        <end position="261"/>
    </location>
</feature>